<protein>
    <recommendedName>
        <fullName evidence="1">D-aminoacyl-tRNA deacylase</fullName>
        <shortName evidence="1">DTD</shortName>
        <ecNumber evidence="1">3.1.1.96</ecNumber>
    </recommendedName>
    <alternativeName>
        <fullName evidence="1">Gly-tRNA(Ala) deacylase</fullName>
    </alternativeName>
</protein>
<proteinExistence type="inferred from homology"/>
<reference key="1">
    <citation type="journal article" date="2008" name="J. Bacteriol.">
        <title>Genome sequence of the streptomycin-producing microorganism Streptomyces griseus IFO 13350.</title>
        <authorList>
            <person name="Ohnishi Y."/>
            <person name="Ishikawa J."/>
            <person name="Hara H."/>
            <person name="Suzuki H."/>
            <person name="Ikenoya M."/>
            <person name="Ikeda H."/>
            <person name="Yamashita A."/>
            <person name="Hattori M."/>
            <person name="Horinouchi S."/>
        </authorList>
    </citation>
    <scope>NUCLEOTIDE SEQUENCE [LARGE SCALE GENOMIC DNA]</scope>
    <source>
        <strain>JCM 4626 / CBS 651.72 / NBRC 13350 / KCC S-0626 / ISP 5235</strain>
    </source>
</reference>
<dbReference type="EC" id="3.1.1.96" evidence="1"/>
<dbReference type="EMBL" id="AP009493">
    <property type="protein sequence ID" value="BAG20802.1"/>
    <property type="molecule type" value="Genomic_DNA"/>
</dbReference>
<dbReference type="RefSeq" id="WP_012380277.1">
    <property type="nucleotide sequence ID" value="NC_010572.1"/>
</dbReference>
<dbReference type="SMR" id="B1VS48"/>
<dbReference type="KEGG" id="sgr:SGR_3973"/>
<dbReference type="eggNOG" id="COG1490">
    <property type="taxonomic scope" value="Bacteria"/>
</dbReference>
<dbReference type="HOGENOM" id="CLU_076901_1_2_11"/>
<dbReference type="Proteomes" id="UP000001685">
    <property type="component" value="Chromosome"/>
</dbReference>
<dbReference type="GO" id="GO:0005737">
    <property type="term" value="C:cytoplasm"/>
    <property type="evidence" value="ECO:0007669"/>
    <property type="project" value="UniProtKB-SubCell"/>
</dbReference>
<dbReference type="GO" id="GO:0051500">
    <property type="term" value="F:D-tyrosyl-tRNA(Tyr) deacylase activity"/>
    <property type="evidence" value="ECO:0007669"/>
    <property type="project" value="TreeGrafter"/>
</dbReference>
<dbReference type="GO" id="GO:0106026">
    <property type="term" value="F:Gly-tRNA(Ala) deacylase activity"/>
    <property type="evidence" value="ECO:0007669"/>
    <property type="project" value="UniProtKB-UniRule"/>
</dbReference>
<dbReference type="GO" id="GO:0043908">
    <property type="term" value="F:Ser(Gly)-tRNA(Ala) hydrolase activity"/>
    <property type="evidence" value="ECO:0007669"/>
    <property type="project" value="UniProtKB-UniRule"/>
</dbReference>
<dbReference type="GO" id="GO:0000049">
    <property type="term" value="F:tRNA binding"/>
    <property type="evidence" value="ECO:0007669"/>
    <property type="project" value="UniProtKB-UniRule"/>
</dbReference>
<dbReference type="GO" id="GO:0019478">
    <property type="term" value="P:D-amino acid catabolic process"/>
    <property type="evidence" value="ECO:0007669"/>
    <property type="project" value="UniProtKB-UniRule"/>
</dbReference>
<dbReference type="CDD" id="cd00563">
    <property type="entry name" value="Dtyr_deacylase"/>
    <property type="match status" value="1"/>
</dbReference>
<dbReference type="FunFam" id="3.50.80.10:FF:000002">
    <property type="entry name" value="D-aminoacyl-tRNA deacylase"/>
    <property type="match status" value="1"/>
</dbReference>
<dbReference type="Gene3D" id="3.50.80.10">
    <property type="entry name" value="D-tyrosyl-tRNA(Tyr) deacylase"/>
    <property type="match status" value="1"/>
</dbReference>
<dbReference type="HAMAP" id="MF_00518">
    <property type="entry name" value="Deacylase_Dtd"/>
    <property type="match status" value="1"/>
</dbReference>
<dbReference type="InterPro" id="IPR003732">
    <property type="entry name" value="Daa-tRNA_deacyls_DTD"/>
</dbReference>
<dbReference type="InterPro" id="IPR023509">
    <property type="entry name" value="DTD-like_sf"/>
</dbReference>
<dbReference type="NCBIfam" id="TIGR00256">
    <property type="entry name" value="D-aminoacyl-tRNA deacylase"/>
    <property type="match status" value="1"/>
</dbReference>
<dbReference type="PANTHER" id="PTHR10472:SF5">
    <property type="entry name" value="D-AMINOACYL-TRNA DEACYLASE 1"/>
    <property type="match status" value="1"/>
</dbReference>
<dbReference type="PANTHER" id="PTHR10472">
    <property type="entry name" value="D-TYROSYL-TRNA TYR DEACYLASE"/>
    <property type="match status" value="1"/>
</dbReference>
<dbReference type="Pfam" id="PF02580">
    <property type="entry name" value="Tyr_Deacylase"/>
    <property type="match status" value="1"/>
</dbReference>
<dbReference type="SUPFAM" id="SSF69500">
    <property type="entry name" value="DTD-like"/>
    <property type="match status" value="1"/>
</dbReference>
<accession>B1VS48</accession>
<comment type="function">
    <text evidence="1">An aminoacyl-tRNA editing enzyme that deacylates mischarged D-aminoacyl-tRNAs. Also deacylates mischarged glycyl-tRNA(Ala), protecting cells against glycine mischarging by AlaRS. Acts via tRNA-based rather than protein-based catalysis; rejects L-amino acids rather than detecting D-amino acids in the active site. By recycling D-aminoacyl-tRNA to D-amino acids and free tRNA molecules, this enzyme counteracts the toxicity associated with the formation of D-aminoacyl-tRNA entities in vivo and helps enforce protein L-homochirality.</text>
</comment>
<comment type="catalytic activity">
    <reaction evidence="1">
        <text>glycyl-tRNA(Ala) + H2O = tRNA(Ala) + glycine + H(+)</text>
        <dbReference type="Rhea" id="RHEA:53744"/>
        <dbReference type="Rhea" id="RHEA-COMP:9657"/>
        <dbReference type="Rhea" id="RHEA-COMP:13640"/>
        <dbReference type="ChEBI" id="CHEBI:15377"/>
        <dbReference type="ChEBI" id="CHEBI:15378"/>
        <dbReference type="ChEBI" id="CHEBI:57305"/>
        <dbReference type="ChEBI" id="CHEBI:78442"/>
        <dbReference type="ChEBI" id="CHEBI:78522"/>
        <dbReference type="EC" id="3.1.1.96"/>
    </reaction>
</comment>
<comment type="catalytic activity">
    <reaction evidence="1">
        <text>a D-aminoacyl-tRNA + H2O = a tRNA + a D-alpha-amino acid + H(+)</text>
        <dbReference type="Rhea" id="RHEA:13953"/>
        <dbReference type="Rhea" id="RHEA-COMP:10123"/>
        <dbReference type="Rhea" id="RHEA-COMP:10124"/>
        <dbReference type="ChEBI" id="CHEBI:15377"/>
        <dbReference type="ChEBI" id="CHEBI:15378"/>
        <dbReference type="ChEBI" id="CHEBI:59871"/>
        <dbReference type="ChEBI" id="CHEBI:78442"/>
        <dbReference type="ChEBI" id="CHEBI:79333"/>
        <dbReference type="EC" id="3.1.1.96"/>
    </reaction>
</comment>
<comment type="subunit">
    <text evidence="1">Homodimer.</text>
</comment>
<comment type="subcellular location">
    <subcellularLocation>
        <location evidence="1">Cytoplasm</location>
    </subcellularLocation>
</comment>
<comment type="domain">
    <text evidence="1">A Gly-cisPro motif from one monomer fits into the active site of the other monomer to allow specific chiral rejection of L-amino acids.</text>
</comment>
<comment type="similarity">
    <text evidence="1">Belongs to the DTD family.</text>
</comment>
<keyword id="KW-0963">Cytoplasm</keyword>
<keyword id="KW-0378">Hydrolase</keyword>
<keyword id="KW-0694">RNA-binding</keyword>
<keyword id="KW-0820">tRNA-binding</keyword>
<sequence>MRAVVQRVDGASVSVAGATDDPSAPGVVGEIVGEGLCVLVGVTHDDTPQKAAQLARKLWSVRVLEGEKSCSDVNAPLLVISQFTLYGDARKGRRPTWNAAAPGEVAEPLVDEVVAQLRALGARVETGRFGADMRVSLTNHGPFTVIIEV</sequence>
<name>DTD_STRGG</name>
<feature type="chain" id="PRO_1000127577" description="D-aminoacyl-tRNA deacylase">
    <location>
        <begin position="1"/>
        <end position="149"/>
    </location>
</feature>
<feature type="short sequence motif" description="Gly-cisPro motif, important for rejection of L-amino acids" evidence="1">
    <location>
        <begin position="141"/>
        <end position="142"/>
    </location>
</feature>
<evidence type="ECO:0000255" key="1">
    <source>
        <dbReference type="HAMAP-Rule" id="MF_00518"/>
    </source>
</evidence>
<gene>
    <name evidence="1" type="primary">dtd</name>
    <name type="ordered locus">SGR_3973</name>
</gene>
<organism>
    <name type="scientific">Streptomyces griseus subsp. griseus (strain JCM 4626 / CBS 651.72 / NBRC 13350 / KCC S-0626 / ISP 5235)</name>
    <dbReference type="NCBI Taxonomy" id="455632"/>
    <lineage>
        <taxon>Bacteria</taxon>
        <taxon>Bacillati</taxon>
        <taxon>Actinomycetota</taxon>
        <taxon>Actinomycetes</taxon>
        <taxon>Kitasatosporales</taxon>
        <taxon>Streptomycetaceae</taxon>
        <taxon>Streptomyces</taxon>
    </lineage>
</organism>